<organism>
    <name type="scientific">Streptococcus pyogenes serotype M28 (strain MGAS6180)</name>
    <dbReference type="NCBI Taxonomy" id="319701"/>
    <lineage>
        <taxon>Bacteria</taxon>
        <taxon>Bacillati</taxon>
        <taxon>Bacillota</taxon>
        <taxon>Bacilli</taxon>
        <taxon>Lactobacillales</taxon>
        <taxon>Streptococcaceae</taxon>
        <taxon>Streptococcus</taxon>
    </lineage>
</organism>
<gene>
    <name evidence="1" type="primary">plsX</name>
    <name type="ordered locus">M28_Spy0020</name>
</gene>
<name>PLSX_STRPM</name>
<dbReference type="EC" id="2.3.1.274" evidence="1"/>
<dbReference type="EMBL" id="CP000056">
    <property type="protein sequence ID" value="AAX71134.1"/>
    <property type="status" value="ALT_INIT"/>
    <property type="molecule type" value="Genomic_DNA"/>
</dbReference>
<dbReference type="RefSeq" id="WP_011284400.1">
    <property type="nucleotide sequence ID" value="NC_007296.2"/>
</dbReference>
<dbReference type="SMR" id="Q48VX8"/>
<dbReference type="KEGG" id="spb:M28_Spy0020"/>
<dbReference type="HOGENOM" id="CLU_039379_1_1_9"/>
<dbReference type="UniPathway" id="UPA00085"/>
<dbReference type="GO" id="GO:0005737">
    <property type="term" value="C:cytoplasm"/>
    <property type="evidence" value="ECO:0007669"/>
    <property type="project" value="UniProtKB-SubCell"/>
</dbReference>
<dbReference type="GO" id="GO:0043811">
    <property type="term" value="F:phosphate:acyl-[acyl carrier protein] acyltransferase activity"/>
    <property type="evidence" value="ECO:0007669"/>
    <property type="project" value="UniProtKB-UniRule"/>
</dbReference>
<dbReference type="GO" id="GO:0006633">
    <property type="term" value="P:fatty acid biosynthetic process"/>
    <property type="evidence" value="ECO:0007669"/>
    <property type="project" value="UniProtKB-UniRule"/>
</dbReference>
<dbReference type="GO" id="GO:0008654">
    <property type="term" value="P:phospholipid biosynthetic process"/>
    <property type="evidence" value="ECO:0007669"/>
    <property type="project" value="UniProtKB-KW"/>
</dbReference>
<dbReference type="Gene3D" id="3.40.718.10">
    <property type="entry name" value="Isopropylmalate Dehydrogenase"/>
    <property type="match status" value="1"/>
</dbReference>
<dbReference type="HAMAP" id="MF_00019">
    <property type="entry name" value="PlsX"/>
    <property type="match status" value="1"/>
</dbReference>
<dbReference type="InterPro" id="IPR003664">
    <property type="entry name" value="FA_synthesis"/>
</dbReference>
<dbReference type="InterPro" id="IPR012281">
    <property type="entry name" value="Phospholipid_synth_PlsX-like"/>
</dbReference>
<dbReference type="NCBIfam" id="TIGR00182">
    <property type="entry name" value="plsX"/>
    <property type="match status" value="1"/>
</dbReference>
<dbReference type="PANTHER" id="PTHR30100">
    <property type="entry name" value="FATTY ACID/PHOSPHOLIPID SYNTHESIS PROTEIN PLSX"/>
    <property type="match status" value="1"/>
</dbReference>
<dbReference type="PANTHER" id="PTHR30100:SF1">
    <property type="entry name" value="PHOSPHATE ACYLTRANSFERASE"/>
    <property type="match status" value="1"/>
</dbReference>
<dbReference type="Pfam" id="PF02504">
    <property type="entry name" value="FA_synthesis"/>
    <property type="match status" value="1"/>
</dbReference>
<dbReference type="PIRSF" id="PIRSF002465">
    <property type="entry name" value="Phsphlp_syn_PlsX"/>
    <property type="match status" value="1"/>
</dbReference>
<dbReference type="SUPFAM" id="SSF53659">
    <property type="entry name" value="Isocitrate/Isopropylmalate dehydrogenase-like"/>
    <property type="match status" value="1"/>
</dbReference>
<proteinExistence type="inferred from homology"/>
<accession>Q48VX8</accession>
<evidence type="ECO:0000255" key="1">
    <source>
        <dbReference type="HAMAP-Rule" id="MF_00019"/>
    </source>
</evidence>
<evidence type="ECO:0000305" key="2"/>
<sequence length="335" mass="35525">MKRIAIDAMGGDNAPKAIVEGVNQAIEAFSDIEIQLYGDQTKINSYLIQSDRVAIIHTDEKIMSDDEPAKAVRRKKKASMVLAAKAVKEGKADAIISAGNTGALLAVGLFVVGRIKGVDRPGLLSTIPTVTGLGFDMLDLGANAENTAKHLHQYAILGSFYAKNVRGIANPRVGLLNNGTEETKGDPLRKATYELLTADNTISFVGNVEARELMSGVADVIVSDGFTGNAVLKSIEGTAISIMGQLKQIINSGGIKTKIGASLLKSSLYEMRKTLDYSSAGGAVLFGLKAPVVKSHGSSDVKAIFSTIKQVRTMLDTNVVGQLVEEFAKETQVND</sequence>
<reference key="1">
    <citation type="journal article" date="2005" name="J. Infect. Dis.">
        <title>Genome sequence of a serotype M28 strain of group A Streptococcus: potential new insights into puerperal sepsis and bacterial disease specificity.</title>
        <authorList>
            <person name="Green N.M."/>
            <person name="Zhang S."/>
            <person name="Porcella S.F."/>
            <person name="Nagiec M.J."/>
            <person name="Barbian K.D."/>
            <person name="Beres S.B."/>
            <person name="Lefebvre R.B."/>
            <person name="Musser J.M."/>
        </authorList>
    </citation>
    <scope>NUCLEOTIDE SEQUENCE [LARGE SCALE GENOMIC DNA]</scope>
    <source>
        <strain>MGAS6180</strain>
    </source>
</reference>
<comment type="function">
    <text evidence="1">Catalyzes the reversible formation of acyl-phosphate (acyl-PO(4)) from acyl-[acyl-carrier-protein] (acyl-ACP). This enzyme utilizes acyl-ACP as fatty acyl donor, but not acyl-CoA.</text>
</comment>
<comment type="catalytic activity">
    <reaction evidence="1">
        <text>a fatty acyl-[ACP] + phosphate = an acyl phosphate + holo-[ACP]</text>
        <dbReference type="Rhea" id="RHEA:42292"/>
        <dbReference type="Rhea" id="RHEA-COMP:9685"/>
        <dbReference type="Rhea" id="RHEA-COMP:14125"/>
        <dbReference type="ChEBI" id="CHEBI:43474"/>
        <dbReference type="ChEBI" id="CHEBI:59918"/>
        <dbReference type="ChEBI" id="CHEBI:64479"/>
        <dbReference type="ChEBI" id="CHEBI:138651"/>
        <dbReference type="EC" id="2.3.1.274"/>
    </reaction>
</comment>
<comment type="pathway">
    <text evidence="1">Lipid metabolism; phospholipid metabolism.</text>
</comment>
<comment type="subunit">
    <text evidence="1">Homodimer. Probably interacts with PlsY.</text>
</comment>
<comment type="subcellular location">
    <subcellularLocation>
        <location evidence="1">Cytoplasm</location>
    </subcellularLocation>
    <text evidence="1">Associated with the membrane possibly through PlsY.</text>
</comment>
<comment type="similarity">
    <text evidence="1">Belongs to the PlsX family.</text>
</comment>
<comment type="sequence caution" evidence="2">
    <conflict type="erroneous initiation">
        <sequence resource="EMBL-CDS" id="AAX71134"/>
    </conflict>
</comment>
<keyword id="KW-0963">Cytoplasm</keyword>
<keyword id="KW-0444">Lipid biosynthesis</keyword>
<keyword id="KW-0443">Lipid metabolism</keyword>
<keyword id="KW-0594">Phospholipid biosynthesis</keyword>
<keyword id="KW-1208">Phospholipid metabolism</keyword>
<keyword id="KW-0808">Transferase</keyword>
<feature type="chain" id="PRO_0000329271" description="Phosphate acyltransferase">
    <location>
        <begin position="1"/>
        <end position="335"/>
    </location>
</feature>
<protein>
    <recommendedName>
        <fullName evidence="1">Phosphate acyltransferase</fullName>
        <ecNumber evidence="1">2.3.1.274</ecNumber>
    </recommendedName>
    <alternativeName>
        <fullName evidence="1">Acyl-ACP phosphotransacylase</fullName>
    </alternativeName>
    <alternativeName>
        <fullName evidence="1">Acyl-[acyl-carrier-protein]--phosphate acyltransferase</fullName>
    </alternativeName>
    <alternativeName>
        <fullName evidence="1">Phosphate-acyl-ACP acyltransferase</fullName>
    </alternativeName>
</protein>